<feature type="signal peptide" evidence="4">
    <location>
        <begin position="1"/>
        <end position="17"/>
    </location>
</feature>
<feature type="chain" id="PRO_0000020306" description="SPARC">
    <location>
        <begin position="18"/>
        <end position="301"/>
    </location>
</feature>
<feature type="domain" description="Follistatin-like">
    <location>
        <begin position="69"/>
        <end position="91"/>
    </location>
</feature>
<feature type="domain" description="Kazal-like" evidence="2">
    <location>
        <begin position="87"/>
        <end position="149"/>
    </location>
</feature>
<feature type="domain" description="EF-hand">
    <location>
        <begin position="259"/>
        <end position="294"/>
    </location>
</feature>
<feature type="binding site" evidence="3">
    <location>
        <position position="272"/>
    </location>
    <ligand>
        <name>Ca(2+)</name>
        <dbReference type="ChEBI" id="CHEBI:29108"/>
    </ligand>
</feature>
<feature type="binding site" evidence="3">
    <location>
        <position position="274"/>
    </location>
    <ligand>
        <name>Ca(2+)</name>
        <dbReference type="ChEBI" id="CHEBI:29108"/>
    </ligand>
</feature>
<feature type="binding site" evidence="3">
    <location>
        <position position="276"/>
    </location>
    <ligand>
        <name>Ca(2+)</name>
        <dbReference type="ChEBI" id="CHEBI:29108"/>
    </ligand>
</feature>
<feature type="binding site" evidence="3">
    <location>
        <position position="278"/>
    </location>
    <ligand>
        <name>Ca(2+)</name>
        <dbReference type="ChEBI" id="CHEBI:29108"/>
    </ligand>
</feature>
<feature type="binding site" evidence="3">
    <location>
        <position position="283"/>
    </location>
    <ligand>
        <name>Ca(2+)</name>
        <dbReference type="ChEBI" id="CHEBI:29108"/>
    </ligand>
</feature>
<feature type="glycosylation site" description="N-linked (GlcNAc...) asparagine" evidence="5">
    <location>
        <position position="114"/>
    </location>
</feature>
<feature type="disulfide bond" evidence="2">
    <location>
        <begin position="70"/>
        <end position="81"/>
    </location>
</feature>
<feature type="disulfide bond" evidence="2">
    <location>
        <begin position="75"/>
        <end position="91"/>
    </location>
</feature>
<feature type="disulfide bond" evidence="2">
    <location>
        <begin position="93"/>
        <end position="128"/>
    </location>
</feature>
<feature type="disulfide bond" evidence="2">
    <location>
        <begin position="99"/>
        <end position="121"/>
    </location>
</feature>
<feature type="disulfide bond" evidence="2">
    <location>
        <begin position="110"/>
        <end position="147"/>
    </location>
</feature>
<feature type="disulfide bond" evidence="2">
    <location>
        <begin position="153"/>
        <end position="263"/>
    </location>
</feature>
<feature type="disulfide bond" evidence="2">
    <location>
        <begin position="271"/>
        <end position="287"/>
    </location>
</feature>
<feature type="sequence conflict" description="In Ref. 1; BAA06029." evidence="5" ref="1">
    <original>V</original>
    <variation>P</variation>
    <location>
        <position position="61"/>
    </location>
</feature>
<feature type="sequence conflict" description="In Ref. 1; BAA06029." evidence="5" ref="1">
    <original>E</original>
    <variation>CN</variation>
    <location>
        <position position="67"/>
    </location>
</feature>
<feature type="sequence conflict" description="In Ref. 1; BAA06029." evidence="5" ref="1">
    <original>ELD</original>
    <variation>DG</variation>
    <location>
        <begin position="82"/>
        <end position="84"/>
    </location>
</feature>
<gene>
    <name type="primary">Sparc</name>
</gene>
<keyword id="KW-0084">Basement membrane</keyword>
<keyword id="KW-0106">Calcium</keyword>
<keyword id="KW-0186">Copper</keyword>
<keyword id="KW-0903">Direct protein sequencing</keyword>
<keyword id="KW-1015">Disulfide bond</keyword>
<keyword id="KW-0272">Extracellular matrix</keyword>
<keyword id="KW-0325">Glycoprotein</keyword>
<keyword id="KW-0479">Metal-binding</keyword>
<keyword id="KW-1185">Reference proteome</keyword>
<keyword id="KW-0964">Secreted</keyword>
<keyword id="KW-0732">Signal</keyword>
<comment type="function">
    <text>Appears to regulate cell growth through interactions with the extracellular matrix and cytokines. Binds calcium and copper, several types of collagen, albumin, thrombospondin, PDGF and cell membranes. There are two calcium binding sites; an acidic domain that binds 5 to 8 Ca(2+) with a low affinity and an EF-hand loop that binds a Ca(2+) ion with a high affinity.</text>
</comment>
<comment type="subcellular location">
    <subcellularLocation>
        <location evidence="4">Secreted</location>
        <location evidence="4">Extracellular space</location>
        <location evidence="4">Extracellular matrix</location>
        <location evidence="4">Basement membrane</location>
    </subcellularLocation>
    <text evidence="1">In or around the basement membrane.</text>
</comment>
<comment type="similarity">
    <text evidence="5">Belongs to the SPARC family.</text>
</comment>
<sequence>MRAWIFFLLCLAGRALAAPQTEAAEEMVAEETVVEETGLPVGANPVQVEMGEFEEGAEETVEEVVAENPCQNHHCKHGKVCELDESNTPMCVCQDPTSCPAPIGEFEKVCSNDNKTFDSSCHFFATKCTLEGTKKGHKLHLDYIGPCKYIAPCLDSELTEFPLRMRDWLKNVLVTLYERDEGNNLLTEKQKLRVKKIHENEKRLEAGDHPVELLARDFEKNYNMYIFPVHWQFGQLDQHPIDGYLSHTELAPLRAPLIPMEHCTTRFFETCDLDNDKYIALEEWAGCFGIKEQDINKDLVI</sequence>
<accession>P16975</accession>
<accession>O08953</accession>
<accession>Q6GSZ4</accession>
<reference key="1">
    <citation type="journal article" date="1995" name="Arch. Toxicol.">
        <title>Regional differences in expression of osteonectin mRNA after administration of cadmium to rats.</title>
        <authorList>
            <person name="Lee M.J."/>
            <person name="Saijoh K."/>
            <person name="Nestler E.J."/>
            <person name="Duman R.S."/>
            <person name="Sumino K."/>
        </authorList>
    </citation>
    <scope>NUCLEOTIDE SEQUENCE [MRNA]</scope>
    <source>
        <strain>Wistar</strain>
        <tissue>Kidney</tissue>
    </source>
</reference>
<reference key="2">
    <citation type="journal article" date="1998" name="Eur. J. Oral Sci.">
        <title>Osteonectin RNA and collagen alpha1(I) RNA in the developing rat maxilla.</title>
        <authorList>
            <person name="Liao H."/>
            <person name="Brandsten C."/>
            <person name="Lundmark C."/>
            <person name="Christersson C."/>
            <person name="Wurtz T."/>
        </authorList>
    </citation>
    <scope>NUCLEOTIDE SEQUENCE [MRNA]</scope>
    <source>
        <strain>Sprague-Dawley</strain>
        <tissue>Bone</tissue>
    </source>
</reference>
<reference key="3">
    <citation type="journal article" date="2004" name="Genome Res.">
        <title>The status, quality, and expansion of the NIH full-length cDNA project: the Mammalian Gene Collection (MGC).</title>
        <authorList>
            <consortium name="The MGC Project Team"/>
        </authorList>
    </citation>
    <scope>NUCLEOTIDE SEQUENCE [LARGE SCALE MRNA]</scope>
    <source>
        <tissue>Prostate</tissue>
    </source>
</reference>
<reference key="4">
    <citation type="journal article" date="1990" name="Biochem. Biophys. Res. Commun.">
        <title>Purification of a calcium binding protein (rat SPARC) from primary Sertoli cell-enriched culture medium.</title>
        <authorList>
            <person name="Cheng C.Y."/>
        </authorList>
    </citation>
    <scope>PROTEIN SEQUENCE OF 18-34</scope>
    <scope>CALCIUM-BINDING</scope>
    <scope>SUBCELLULAR LOCATION</scope>
</reference>
<evidence type="ECO:0000250" key="1"/>
<evidence type="ECO:0000255" key="2">
    <source>
        <dbReference type="PROSITE-ProRule" id="PRU00798"/>
    </source>
</evidence>
<evidence type="ECO:0000255" key="3">
    <source>
        <dbReference type="PROSITE-ProRule" id="PRU10142"/>
    </source>
</evidence>
<evidence type="ECO:0000269" key="4">
    <source>
    </source>
</evidence>
<evidence type="ECO:0000305" key="5"/>
<organism>
    <name type="scientific">Rattus norvegicus</name>
    <name type="common">Rat</name>
    <dbReference type="NCBI Taxonomy" id="10116"/>
    <lineage>
        <taxon>Eukaryota</taxon>
        <taxon>Metazoa</taxon>
        <taxon>Chordata</taxon>
        <taxon>Craniata</taxon>
        <taxon>Vertebrata</taxon>
        <taxon>Euteleostomi</taxon>
        <taxon>Mammalia</taxon>
        <taxon>Eutheria</taxon>
        <taxon>Euarchontoglires</taxon>
        <taxon>Glires</taxon>
        <taxon>Rodentia</taxon>
        <taxon>Myomorpha</taxon>
        <taxon>Muroidea</taxon>
        <taxon>Muridae</taxon>
        <taxon>Murinae</taxon>
        <taxon>Rattus</taxon>
    </lineage>
</organism>
<protein>
    <recommendedName>
        <fullName>SPARC</fullName>
    </recommendedName>
    <alternativeName>
        <fullName>Basement-membrane protein 40</fullName>
        <shortName>BM-40</shortName>
    </alternativeName>
    <alternativeName>
        <fullName>Osteonectin</fullName>
        <shortName>ON</shortName>
    </alternativeName>
    <alternativeName>
        <fullName>Secreted protein acidic and rich in cysteine</fullName>
    </alternativeName>
</protein>
<name>SPRC_RAT</name>
<dbReference type="EMBL" id="D28875">
    <property type="protein sequence ID" value="BAA06029.1"/>
    <property type="molecule type" value="mRNA"/>
</dbReference>
<dbReference type="EMBL" id="Y13714">
    <property type="protein sequence ID" value="CAA74042.1"/>
    <property type="molecule type" value="mRNA"/>
</dbReference>
<dbReference type="EMBL" id="BC061777">
    <property type="protein sequence ID" value="AAH61777.1"/>
    <property type="molecule type" value="mRNA"/>
</dbReference>
<dbReference type="PIR" id="A34572">
    <property type="entry name" value="A34572"/>
</dbReference>
<dbReference type="RefSeq" id="NP_036788.1">
    <property type="nucleotide sequence ID" value="NM_012656.2"/>
</dbReference>
<dbReference type="SMR" id="P16975"/>
<dbReference type="BioGRID" id="246915">
    <property type="interactions" value="1"/>
</dbReference>
<dbReference type="FunCoup" id="P16975">
    <property type="interactions" value="1071"/>
</dbReference>
<dbReference type="IntAct" id="P16975">
    <property type="interactions" value="1"/>
</dbReference>
<dbReference type="STRING" id="10116.ENSRNOP00000017486"/>
<dbReference type="GlyCosmos" id="P16975">
    <property type="glycosylation" value="1 site, No reported glycans"/>
</dbReference>
<dbReference type="GlyGen" id="P16975">
    <property type="glycosylation" value="1 site"/>
</dbReference>
<dbReference type="PhosphoSitePlus" id="P16975"/>
<dbReference type="PaxDb" id="10116-ENSRNOP00000017486"/>
<dbReference type="GeneID" id="24791"/>
<dbReference type="KEGG" id="rno:24791"/>
<dbReference type="UCSC" id="RGD:3742">
    <property type="organism name" value="rat"/>
</dbReference>
<dbReference type="AGR" id="RGD:3742"/>
<dbReference type="CTD" id="6678"/>
<dbReference type="RGD" id="3742">
    <property type="gene designation" value="Sparc"/>
</dbReference>
<dbReference type="VEuPathDB" id="HostDB:ENSRNOG00000012840"/>
<dbReference type="eggNOG" id="KOG4004">
    <property type="taxonomic scope" value="Eukaryota"/>
</dbReference>
<dbReference type="HOGENOM" id="CLU_047416_0_0_1"/>
<dbReference type="InParanoid" id="P16975"/>
<dbReference type="OrthoDB" id="15008at9989"/>
<dbReference type="Reactome" id="R-RNO-114608">
    <property type="pathway name" value="Platelet degranulation"/>
</dbReference>
<dbReference type="Reactome" id="R-RNO-3000178">
    <property type="pathway name" value="ECM proteoglycans"/>
</dbReference>
<dbReference type="Reactome" id="R-RNO-3000497">
    <property type="pathway name" value="Scavenging by Class H Receptors"/>
</dbReference>
<dbReference type="PRO" id="PR:P16975"/>
<dbReference type="Proteomes" id="UP000002494">
    <property type="component" value="Chromosome 10"/>
</dbReference>
<dbReference type="Bgee" id="ENSRNOG00000012840">
    <property type="expression patterns" value="Expressed in lung and 19 other cell types or tissues"/>
</dbReference>
<dbReference type="GO" id="GO:0005604">
    <property type="term" value="C:basement membrane"/>
    <property type="evidence" value="ECO:0007669"/>
    <property type="project" value="UniProtKB-SubCell"/>
</dbReference>
<dbReference type="GO" id="GO:0009986">
    <property type="term" value="C:cell surface"/>
    <property type="evidence" value="ECO:0000266"/>
    <property type="project" value="RGD"/>
</dbReference>
<dbReference type="GO" id="GO:0005737">
    <property type="term" value="C:cytoplasm"/>
    <property type="evidence" value="ECO:0000266"/>
    <property type="project" value="RGD"/>
</dbReference>
<dbReference type="GO" id="GO:0031012">
    <property type="term" value="C:extracellular matrix"/>
    <property type="evidence" value="ECO:0000266"/>
    <property type="project" value="RGD"/>
</dbReference>
<dbReference type="GO" id="GO:0005615">
    <property type="term" value="C:extracellular space"/>
    <property type="evidence" value="ECO:0000314"/>
    <property type="project" value="RGD"/>
</dbReference>
<dbReference type="GO" id="GO:0098978">
    <property type="term" value="C:glutamatergic synapse"/>
    <property type="evidence" value="ECO:0000314"/>
    <property type="project" value="SynGO"/>
</dbReference>
<dbReference type="GO" id="GO:0016363">
    <property type="term" value="C:nuclear matrix"/>
    <property type="evidence" value="ECO:0000266"/>
    <property type="project" value="RGD"/>
</dbReference>
<dbReference type="GO" id="GO:0031091">
    <property type="term" value="C:platelet alpha granule"/>
    <property type="evidence" value="ECO:0000266"/>
    <property type="project" value="RGD"/>
</dbReference>
<dbReference type="GO" id="GO:0031092">
    <property type="term" value="C:platelet alpha granule membrane"/>
    <property type="evidence" value="ECO:0000266"/>
    <property type="project" value="RGD"/>
</dbReference>
<dbReference type="GO" id="GO:0045202">
    <property type="term" value="C:synapse"/>
    <property type="evidence" value="ECO:0000314"/>
    <property type="project" value="SynGO"/>
</dbReference>
<dbReference type="GO" id="GO:0031982">
    <property type="term" value="C:vesicle"/>
    <property type="evidence" value="ECO:0000314"/>
    <property type="project" value="RGD"/>
</dbReference>
<dbReference type="GO" id="GO:0005509">
    <property type="term" value="F:calcium ion binding"/>
    <property type="evidence" value="ECO:0000314"/>
    <property type="project" value="RGD"/>
</dbReference>
<dbReference type="GO" id="GO:0005518">
    <property type="term" value="F:collagen binding"/>
    <property type="evidence" value="ECO:0000266"/>
    <property type="project" value="RGD"/>
</dbReference>
<dbReference type="GO" id="GO:0050840">
    <property type="term" value="F:extracellular matrix binding"/>
    <property type="evidence" value="ECO:0000266"/>
    <property type="project" value="RGD"/>
</dbReference>
<dbReference type="GO" id="GO:0060348">
    <property type="term" value="P:bone development"/>
    <property type="evidence" value="ECO:0000266"/>
    <property type="project" value="RGD"/>
</dbReference>
<dbReference type="GO" id="GO:0071363">
    <property type="term" value="P:cellular response to growth factor stimulus"/>
    <property type="evidence" value="ECO:0000266"/>
    <property type="project" value="RGD"/>
</dbReference>
<dbReference type="GO" id="GO:0007507">
    <property type="term" value="P:heart development"/>
    <property type="evidence" value="ECO:0000270"/>
    <property type="project" value="RGD"/>
</dbReference>
<dbReference type="GO" id="GO:0048839">
    <property type="term" value="P:inner ear development"/>
    <property type="evidence" value="ECO:0000270"/>
    <property type="project" value="RGD"/>
</dbReference>
<dbReference type="GO" id="GO:0030324">
    <property type="term" value="P:lung development"/>
    <property type="evidence" value="ECO:0000315"/>
    <property type="project" value="RGD"/>
</dbReference>
<dbReference type="GO" id="GO:0016525">
    <property type="term" value="P:negative regulation of angiogenesis"/>
    <property type="evidence" value="ECO:0000266"/>
    <property type="project" value="RGD"/>
</dbReference>
<dbReference type="GO" id="GO:0001937">
    <property type="term" value="P:negative regulation of endothelial cell proliferation"/>
    <property type="evidence" value="ECO:0000266"/>
    <property type="project" value="RGD"/>
</dbReference>
<dbReference type="GO" id="GO:0001503">
    <property type="term" value="P:ossification"/>
    <property type="evidence" value="ECO:0000270"/>
    <property type="project" value="RGD"/>
</dbReference>
<dbReference type="GO" id="GO:0043473">
    <property type="term" value="P:pigmentation"/>
    <property type="evidence" value="ECO:0000266"/>
    <property type="project" value="RGD"/>
</dbReference>
<dbReference type="GO" id="GO:0010595">
    <property type="term" value="P:positive regulation of endothelial cell migration"/>
    <property type="evidence" value="ECO:0000266"/>
    <property type="project" value="RGD"/>
</dbReference>
<dbReference type="GO" id="GO:0022604">
    <property type="term" value="P:regulation of cell morphogenesis"/>
    <property type="evidence" value="ECO:0000266"/>
    <property type="project" value="RGD"/>
</dbReference>
<dbReference type="GO" id="GO:0042127">
    <property type="term" value="P:regulation of cell population proliferation"/>
    <property type="evidence" value="ECO:0000266"/>
    <property type="project" value="RGD"/>
</dbReference>
<dbReference type="GO" id="GO:0050807">
    <property type="term" value="P:regulation of synapse organization"/>
    <property type="evidence" value="ECO:0000314"/>
    <property type="project" value="SynGO"/>
</dbReference>
<dbReference type="GO" id="GO:0046686">
    <property type="term" value="P:response to cadmium ion"/>
    <property type="evidence" value="ECO:0000270"/>
    <property type="project" value="RGD"/>
</dbReference>
<dbReference type="GO" id="GO:0051592">
    <property type="term" value="P:response to calcium ion"/>
    <property type="evidence" value="ECO:0000270"/>
    <property type="project" value="RGD"/>
</dbReference>
<dbReference type="GO" id="GO:0051591">
    <property type="term" value="P:response to cAMP"/>
    <property type="evidence" value="ECO:0000270"/>
    <property type="project" value="RGD"/>
</dbReference>
<dbReference type="GO" id="GO:0034097">
    <property type="term" value="P:response to cytokine"/>
    <property type="evidence" value="ECO:0000270"/>
    <property type="project" value="RGD"/>
</dbReference>
<dbReference type="GO" id="GO:0045471">
    <property type="term" value="P:response to ethanol"/>
    <property type="evidence" value="ECO:0000270"/>
    <property type="project" value="RGD"/>
</dbReference>
<dbReference type="GO" id="GO:0051384">
    <property type="term" value="P:response to glucocorticoid"/>
    <property type="evidence" value="ECO:0000270"/>
    <property type="project" value="RGD"/>
</dbReference>
<dbReference type="GO" id="GO:0009629">
    <property type="term" value="P:response to gravity"/>
    <property type="evidence" value="ECO:0000270"/>
    <property type="project" value="RGD"/>
</dbReference>
<dbReference type="GO" id="GO:0033591">
    <property type="term" value="P:response to L-ascorbic acid"/>
    <property type="evidence" value="ECO:0000270"/>
    <property type="project" value="RGD"/>
</dbReference>
<dbReference type="GO" id="GO:0010288">
    <property type="term" value="P:response to lead ion"/>
    <property type="evidence" value="ECO:0000270"/>
    <property type="project" value="RGD"/>
</dbReference>
<dbReference type="GO" id="GO:0032496">
    <property type="term" value="P:response to lipopolysaccharide"/>
    <property type="evidence" value="ECO:0000270"/>
    <property type="project" value="RGD"/>
</dbReference>
<dbReference type="GO" id="GO:0043434">
    <property type="term" value="P:response to peptide hormone"/>
    <property type="evidence" value="ECO:0000270"/>
    <property type="project" value="RGD"/>
</dbReference>
<dbReference type="GO" id="GO:0048752">
    <property type="term" value="P:semicircular canal morphogenesis"/>
    <property type="evidence" value="ECO:0000318"/>
    <property type="project" value="GO_Central"/>
</dbReference>
<dbReference type="CDD" id="cd16235">
    <property type="entry name" value="EFh_SPARC_SPARC"/>
    <property type="match status" value="1"/>
</dbReference>
<dbReference type="CDD" id="cd01328">
    <property type="entry name" value="FSL_SPARC"/>
    <property type="match status" value="1"/>
</dbReference>
<dbReference type="FunFam" id="1.10.238.10:FF:000068">
    <property type="entry name" value="SPARC isoform 1"/>
    <property type="match status" value="1"/>
</dbReference>
<dbReference type="FunFam" id="3.30.60.30:FF:000004">
    <property type="entry name" value="SPARC isoform 1"/>
    <property type="match status" value="1"/>
</dbReference>
<dbReference type="Gene3D" id="3.30.60.30">
    <property type="match status" value="1"/>
</dbReference>
<dbReference type="Gene3D" id="1.10.238.10">
    <property type="entry name" value="EF-hand"/>
    <property type="match status" value="1"/>
</dbReference>
<dbReference type="InterPro" id="IPR011992">
    <property type="entry name" value="EF-hand-dom_pair"/>
</dbReference>
<dbReference type="InterPro" id="IPR018247">
    <property type="entry name" value="EF_Hand_1_Ca_BS"/>
</dbReference>
<dbReference type="InterPro" id="IPR003645">
    <property type="entry name" value="Fol_N"/>
</dbReference>
<dbReference type="InterPro" id="IPR015369">
    <property type="entry name" value="Follistatin/Osteonectin_EGF"/>
</dbReference>
<dbReference type="InterPro" id="IPR002350">
    <property type="entry name" value="Kazal_dom"/>
</dbReference>
<dbReference type="InterPro" id="IPR036058">
    <property type="entry name" value="Kazal_dom_sf"/>
</dbReference>
<dbReference type="InterPro" id="IPR001999">
    <property type="entry name" value="Osteonectin_CS"/>
</dbReference>
<dbReference type="InterPro" id="IPR019577">
    <property type="entry name" value="SPARC/Testican_Ca-bd-dom"/>
</dbReference>
<dbReference type="InterPro" id="IPR037641">
    <property type="entry name" value="SPARC_FS"/>
</dbReference>
<dbReference type="PANTHER" id="PTHR13866:SF6">
    <property type="entry name" value="SPARC"/>
    <property type="match status" value="1"/>
</dbReference>
<dbReference type="PANTHER" id="PTHR13866">
    <property type="entry name" value="SPARC OSTEONECTIN"/>
    <property type="match status" value="1"/>
</dbReference>
<dbReference type="Pfam" id="PF09289">
    <property type="entry name" value="FOLN"/>
    <property type="match status" value="1"/>
</dbReference>
<dbReference type="Pfam" id="PF00050">
    <property type="entry name" value="Kazal_1"/>
    <property type="match status" value="1"/>
</dbReference>
<dbReference type="Pfam" id="PF10591">
    <property type="entry name" value="SPARC_Ca_bdg"/>
    <property type="match status" value="1"/>
</dbReference>
<dbReference type="SMART" id="SM00274">
    <property type="entry name" value="FOLN"/>
    <property type="match status" value="1"/>
</dbReference>
<dbReference type="SMART" id="SM00280">
    <property type="entry name" value="KAZAL"/>
    <property type="match status" value="1"/>
</dbReference>
<dbReference type="SUPFAM" id="SSF47473">
    <property type="entry name" value="EF-hand"/>
    <property type="match status" value="1"/>
</dbReference>
<dbReference type="SUPFAM" id="SSF57196">
    <property type="entry name" value="EGF/Laminin"/>
    <property type="match status" value="1"/>
</dbReference>
<dbReference type="SUPFAM" id="SSF100895">
    <property type="entry name" value="Kazal-type serine protease inhibitors"/>
    <property type="match status" value="1"/>
</dbReference>
<dbReference type="PROSITE" id="PS00018">
    <property type="entry name" value="EF_HAND_1"/>
    <property type="match status" value="1"/>
</dbReference>
<dbReference type="PROSITE" id="PS51465">
    <property type="entry name" value="KAZAL_2"/>
    <property type="match status" value="1"/>
</dbReference>
<dbReference type="PROSITE" id="PS00612">
    <property type="entry name" value="OSTEONECTIN_1"/>
    <property type="match status" value="1"/>
</dbReference>
<dbReference type="PROSITE" id="PS00613">
    <property type="entry name" value="OSTEONECTIN_2"/>
    <property type="match status" value="1"/>
</dbReference>
<proteinExistence type="evidence at protein level"/>